<sequence length="486" mass="52702">MISNGSKTRKNLGAIALAGMVISSMIGGGIFSLPQNMAASAGAGAIILAWILTGIGMFFIANTFKILSLVRPDLTTGIYMYSREGFGPYVGFTIGWGYWLCQIFGNVGYAVMTMDALNYFFPPYFKGGNTIPAIIGGSILIWVFNFIVLKGIRQASFINVIGTICKLIPLLIFIIITAFFFKLAIFKTDFWGHTATKTQPLLGSVTSQLKSTMLVTLWAFIGIEGAVVMSARAKSPNAVGKATILGFSGCLIVYVLLSLLPFGSLFQHQLAGIANPSTAGVLDILVGRWGEILMNIGLLIAILSSWLSWTVIVAEIPYSAAKNGTFPEIFTIENAAHSPKVSLYITSALMQVAMLLVYFSTNAWSTMLSITGVMVLPAYLASAAFLVKFSKDKKYPNKGPIKSFTAKYTGILAVIYSIWLIYAGGIKYLFMAIVLLALGIPFYIEAGKKGKNAKTFFAKKEVTKITIIAFLALLAIFLFSTERIRL</sequence>
<protein>
    <recommendedName>
        <fullName>Arginine/agmatine antiporter</fullName>
    </recommendedName>
</protein>
<proteinExistence type="inferred from homology"/>
<evidence type="ECO:0000250" key="1"/>
<evidence type="ECO:0000255" key="2"/>
<evidence type="ECO:0000305" key="3"/>
<dbReference type="EMBL" id="AP006861">
    <property type="protein sequence ID" value="BAE81057.1"/>
    <property type="molecule type" value="Genomic_DNA"/>
</dbReference>
<dbReference type="RefSeq" id="WP_011457838.1">
    <property type="nucleotide sequence ID" value="NC_007899.1"/>
</dbReference>
<dbReference type="SMR" id="Q255I1"/>
<dbReference type="STRING" id="264202.CF0285"/>
<dbReference type="KEGG" id="cfe:CF0285"/>
<dbReference type="eggNOG" id="COG0531">
    <property type="taxonomic scope" value="Bacteria"/>
</dbReference>
<dbReference type="HOGENOM" id="CLU_007946_1_2_0"/>
<dbReference type="OrthoDB" id="178667at2"/>
<dbReference type="Proteomes" id="UP000001260">
    <property type="component" value="Chromosome"/>
</dbReference>
<dbReference type="GO" id="GO:0005886">
    <property type="term" value="C:plasma membrane"/>
    <property type="evidence" value="ECO:0007669"/>
    <property type="project" value="UniProtKB-SubCell"/>
</dbReference>
<dbReference type="GO" id="GO:0015297">
    <property type="term" value="F:antiporter activity"/>
    <property type="evidence" value="ECO:0007669"/>
    <property type="project" value="UniProtKB-KW"/>
</dbReference>
<dbReference type="GO" id="GO:0006865">
    <property type="term" value="P:amino acid transport"/>
    <property type="evidence" value="ECO:0007669"/>
    <property type="project" value="UniProtKB-KW"/>
</dbReference>
<dbReference type="Gene3D" id="1.20.1740.10">
    <property type="entry name" value="Amino acid/polyamine transporter I"/>
    <property type="match status" value="1"/>
</dbReference>
<dbReference type="InterPro" id="IPR002293">
    <property type="entry name" value="AA/rel_permease1"/>
</dbReference>
<dbReference type="InterPro" id="IPR004754">
    <property type="entry name" value="Amino_acid_antiprt"/>
</dbReference>
<dbReference type="InterPro" id="IPR050367">
    <property type="entry name" value="APC_superfamily"/>
</dbReference>
<dbReference type="NCBIfam" id="TIGR00905">
    <property type="entry name" value="2A0302"/>
    <property type="match status" value="1"/>
</dbReference>
<dbReference type="PANTHER" id="PTHR42770">
    <property type="entry name" value="AMINO ACID TRANSPORTER-RELATED"/>
    <property type="match status" value="1"/>
</dbReference>
<dbReference type="PANTHER" id="PTHR42770:SF4">
    <property type="entry name" value="ARGININE_ORNITHINE ANTIPORTER-RELATED"/>
    <property type="match status" value="1"/>
</dbReference>
<dbReference type="Pfam" id="PF13520">
    <property type="entry name" value="AA_permease_2"/>
    <property type="match status" value="1"/>
</dbReference>
<dbReference type="PIRSF" id="PIRSF006060">
    <property type="entry name" value="AA_transporter"/>
    <property type="match status" value="1"/>
</dbReference>
<organism>
    <name type="scientific">Chlamydia felis (strain Fe/C-56)</name>
    <name type="common">Chlamydophila felis</name>
    <dbReference type="NCBI Taxonomy" id="264202"/>
    <lineage>
        <taxon>Bacteria</taxon>
        <taxon>Pseudomonadati</taxon>
        <taxon>Chlamydiota</taxon>
        <taxon>Chlamydiia</taxon>
        <taxon>Chlamydiales</taxon>
        <taxon>Chlamydiaceae</taxon>
        <taxon>Chlamydia/Chlamydophila group</taxon>
        <taxon>Chlamydia</taxon>
    </lineage>
</organism>
<reference key="1">
    <citation type="journal article" date="2006" name="DNA Res.">
        <title>Genome sequence of the cat pathogen, Chlamydophila felis.</title>
        <authorList>
            <person name="Azuma Y."/>
            <person name="Hirakawa H."/>
            <person name="Yamashita A."/>
            <person name="Cai Y."/>
            <person name="Rahman M.A."/>
            <person name="Suzuki H."/>
            <person name="Mitaku S."/>
            <person name="Toh H."/>
            <person name="Goto S."/>
            <person name="Murakami T."/>
            <person name="Sugi K."/>
            <person name="Hayashi H."/>
            <person name="Fukushi H."/>
            <person name="Hattori M."/>
            <person name="Kuhara S."/>
            <person name="Shirai M."/>
        </authorList>
    </citation>
    <scope>NUCLEOTIDE SEQUENCE [LARGE SCALE GENOMIC DNA]</scope>
    <source>
        <strain>Fe/C-56</strain>
    </source>
</reference>
<keyword id="KW-0029">Amino-acid transport</keyword>
<keyword id="KW-0050">Antiport</keyword>
<keyword id="KW-0997">Cell inner membrane</keyword>
<keyword id="KW-1003">Cell membrane</keyword>
<keyword id="KW-0472">Membrane</keyword>
<keyword id="KW-0812">Transmembrane</keyword>
<keyword id="KW-1133">Transmembrane helix</keyword>
<keyword id="KW-0813">Transport</keyword>
<keyword id="KW-0843">Virulence</keyword>
<comment type="function">
    <text evidence="1">Catalyzes the exchange of L-arginine for agmatine. The arginine uptake by the bacterium in the macrophage may be a virulence factor against the host innate immune response (By similarity).</text>
</comment>
<comment type="subcellular location">
    <subcellularLocation>
        <location evidence="1">Cell inner membrane</location>
        <topology evidence="1">Multi-pass membrane protein</topology>
    </subcellularLocation>
</comment>
<comment type="similarity">
    <text evidence="3">Belongs to the amino acid-polyamine-organocation (APC) superfamily. Basic amino acid/polyamine antiporter (APA) (TC 2.A.3.2) family.</text>
</comment>
<name>AAXC_CHLFF</name>
<gene>
    <name type="primary">aaxC</name>
    <name type="synonym">arcD</name>
    <name type="ordered locus">CF0285</name>
</gene>
<feature type="chain" id="PRO_0000363175" description="Arginine/agmatine antiporter">
    <location>
        <begin position="1"/>
        <end position="486"/>
    </location>
</feature>
<feature type="transmembrane region" description="Helical" evidence="2">
    <location>
        <begin position="12"/>
        <end position="32"/>
    </location>
</feature>
<feature type="transmembrane region" description="Helical" evidence="2">
    <location>
        <begin position="41"/>
        <end position="61"/>
    </location>
</feature>
<feature type="transmembrane region" description="Helical" evidence="2">
    <location>
        <begin position="85"/>
        <end position="105"/>
    </location>
</feature>
<feature type="transmembrane region" description="Helical" evidence="2">
    <location>
        <begin position="129"/>
        <end position="149"/>
    </location>
</feature>
<feature type="transmembrane region" description="Helical" evidence="2">
    <location>
        <begin position="161"/>
        <end position="181"/>
    </location>
</feature>
<feature type="transmembrane region" description="Helical" evidence="2">
    <location>
        <begin position="211"/>
        <end position="231"/>
    </location>
</feature>
<feature type="transmembrane region" description="Helical" evidence="2">
    <location>
        <begin position="242"/>
        <end position="262"/>
    </location>
</feature>
<feature type="transmembrane region" description="Helical" evidence="2">
    <location>
        <begin position="296"/>
        <end position="316"/>
    </location>
</feature>
<feature type="transmembrane region" description="Helical" evidence="2">
    <location>
        <begin position="341"/>
        <end position="361"/>
    </location>
</feature>
<feature type="transmembrane region" description="Helical" evidence="2">
    <location>
        <begin position="367"/>
        <end position="387"/>
    </location>
</feature>
<feature type="transmembrane region" description="Helical" evidence="2">
    <location>
        <begin position="418"/>
        <end position="438"/>
    </location>
</feature>
<feature type="transmembrane region" description="Helical" evidence="2">
    <location>
        <begin position="461"/>
        <end position="481"/>
    </location>
</feature>
<accession>Q255I1</accession>